<organism>
    <name type="scientific">Ceratotherium simum simum</name>
    <name type="common">Southern white rhinoceros</name>
    <dbReference type="NCBI Taxonomy" id="73337"/>
    <lineage>
        <taxon>Eukaryota</taxon>
        <taxon>Metazoa</taxon>
        <taxon>Chordata</taxon>
        <taxon>Craniata</taxon>
        <taxon>Vertebrata</taxon>
        <taxon>Euteleostomi</taxon>
        <taxon>Mammalia</taxon>
        <taxon>Eutheria</taxon>
        <taxon>Laurasiatheria</taxon>
        <taxon>Perissodactyla</taxon>
        <taxon>Rhinocerotidae</taxon>
        <taxon>Ceratotherium</taxon>
    </lineage>
</organism>
<keyword id="KW-0445">Lipid transport</keyword>
<keyword id="KW-0964">Secreted</keyword>
<keyword id="KW-0732">Signal</keyword>
<keyword id="KW-0813">Transport</keyword>
<proteinExistence type="inferred from homology"/>
<reference key="1">
    <citation type="submission" date="2012-05" db="EMBL/GenBank/DDBJ databases">
        <title>The Draft Genome of Ceratotherium simum.</title>
        <authorList>
            <person name="Di Palma F."/>
            <person name="Alfoldi J."/>
            <person name="Johnson J."/>
            <person name="Berlin A."/>
            <person name="Gnerre S."/>
            <person name="Jaffe D."/>
            <person name="MacCallum I."/>
            <person name="Young S."/>
            <person name="Walker B.J."/>
            <person name="Lindblad-Toh K."/>
        </authorList>
    </citation>
    <scope>NUCLEOTIDE SEQUENCE [LARGE SCALE GENOMIC DNA]</scope>
</reference>
<reference key="2">
    <citation type="unpublished observations" date="2021-01">
        <authorList>
            <person name="Puppione D.L."/>
        </authorList>
    </citation>
    <scope>IDENTIFICATION</scope>
</reference>
<comment type="function">
    <text evidence="1">May participate in lipoprotein metabolism.</text>
</comment>
<comment type="subcellular location">
    <subcellularLocation>
        <location evidence="1">Secreted</location>
    </subcellularLocation>
</comment>
<comment type="similarity">
    <text evidence="3">Belongs to the apolipoprotein C4 family.</text>
</comment>
<evidence type="ECO:0000250" key="1"/>
<evidence type="ECO:0000255" key="2"/>
<evidence type="ECO:0000305" key="3"/>
<sequence>MSLPGRRPWALPSFCFYVLVLAWVVACQQEVPTGSPSPPPGRASGLWGLVRGKVKEFMEPLVTKTRERWRWFWGPSAFRDFMQTYYDDHLRDLRPRAQAWLRSSKESLLNKAYNMCPQLLCGDRDQG</sequence>
<protein>
    <recommendedName>
        <fullName>Apolipoprotein C-IV</fullName>
        <shortName>Apo-CIV</shortName>
        <shortName>ApoC-IV</shortName>
    </recommendedName>
    <alternativeName>
        <fullName>Apolipoprotein C4</fullName>
    </alternativeName>
</protein>
<gene>
    <name type="primary">APOC4</name>
</gene>
<dbReference type="EMBL" id="AKZM01045081">
    <property type="status" value="NOT_ANNOTATED_CDS"/>
    <property type="molecule type" value="Genomic_DNA"/>
</dbReference>
<dbReference type="GeneID" id="101393414"/>
<dbReference type="OMA" id="KWQWFWG"/>
<dbReference type="OrthoDB" id="154665at314145"/>
<dbReference type="Proteomes" id="UP000694910">
    <property type="component" value="Unplaced"/>
</dbReference>
<dbReference type="GO" id="GO:0034364">
    <property type="term" value="C:high-density lipoprotein particle"/>
    <property type="evidence" value="ECO:0007669"/>
    <property type="project" value="TreeGrafter"/>
</dbReference>
<dbReference type="GO" id="GO:0034361">
    <property type="term" value="C:very-low-density lipoprotein particle"/>
    <property type="evidence" value="ECO:0007669"/>
    <property type="project" value="TreeGrafter"/>
</dbReference>
<dbReference type="GO" id="GO:0006869">
    <property type="term" value="P:lipid transport"/>
    <property type="evidence" value="ECO:0007669"/>
    <property type="project" value="UniProtKB-KW"/>
</dbReference>
<dbReference type="GO" id="GO:0010890">
    <property type="term" value="P:positive regulation of triglyceride storage"/>
    <property type="evidence" value="ECO:0007669"/>
    <property type="project" value="TreeGrafter"/>
</dbReference>
<dbReference type="GO" id="GO:0070328">
    <property type="term" value="P:triglyceride homeostasis"/>
    <property type="evidence" value="ECO:0007669"/>
    <property type="project" value="TreeGrafter"/>
</dbReference>
<dbReference type="InterPro" id="IPR028120">
    <property type="entry name" value="APOC4"/>
</dbReference>
<dbReference type="PANTHER" id="PTHR32288">
    <property type="entry name" value="APOLIPOPROTEIN C-IV"/>
    <property type="match status" value="1"/>
</dbReference>
<dbReference type="PANTHER" id="PTHR32288:SF0">
    <property type="entry name" value="APOLIPOPROTEIN C-IV"/>
    <property type="match status" value="1"/>
</dbReference>
<dbReference type="Pfam" id="PF15119">
    <property type="entry name" value="APOC4"/>
    <property type="match status" value="1"/>
</dbReference>
<feature type="signal peptide" evidence="2">
    <location>
        <begin position="1"/>
        <end position="27"/>
    </location>
</feature>
<feature type="chain" id="PRO_0000452518" description="Apolipoprotein C-IV">
    <location>
        <begin position="28"/>
        <end position="127"/>
    </location>
</feature>
<accession>P0DTH4</accession>
<name>APOC4_CERSS</name>